<organism>
    <name type="scientific">Homo sapiens</name>
    <name type="common">Human</name>
    <dbReference type="NCBI Taxonomy" id="9606"/>
    <lineage>
        <taxon>Eukaryota</taxon>
        <taxon>Metazoa</taxon>
        <taxon>Chordata</taxon>
        <taxon>Craniata</taxon>
        <taxon>Vertebrata</taxon>
        <taxon>Euteleostomi</taxon>
        <taxon>Mammalia</taxon>
        <taxon>Eutheria</taxon>
        <taxon>Euarchontoglires</taxon>
        <taxon>Primates</taxon>
        <taxon>Haplorrhini</taxon>
        <taxon>Catarrhini</taxon>
        <taxon>Hominidae</taxon>
        <taxon>Homo</taxon>
    </lineage>
</organism>
<feature type="signal peptide" evidence="2">
    <location>
        <begin position="1"/>
        <end position="24"/>
    </location>
</feature>
<feature type="peptide" id="PRO_0000020904" description="CAMPATH-1 antigen">
    <location>
        <begin position="25"/>
        <end position="36"/>
    </location>
</feature>
<feature type="propeptide" id="PRO_0000020905" description="Removed in mature form" evidence="1">
    <location>
        <begin position="37"/>
        <end position="61"/>
    </location>
</feature>
<feature type="lipid moiety-binding region" description="GPI-anchor amidated serine" evidence="3">
    <location>
        <position position="36"/>
    </location>
</feature>
<feature type="glycosylation site" description="N-linked (GlcNAc...) asparagine">
    <location>
        <position position="27"/>
    </location>
</feature>
<feature type="glycosylation site" description="N-linked (GlcNAc...) asparagine" evidence="1">
    <location>
        <position position="40"/>
    </location>
</feature>
<feature type="sequence variant" id="VAR_050775" description="In dbSNP:rs1071849.">
    <original>N</original>
    <variation>S</variation>
    <location>
        <position position="40"/>
    </location>
</feature>
<feature type="sequence variant" id="VAR_014838" description="In dbSNP:rs17645.">
    <original>I</original>
    <variation>M</variation>
    <location>
        <position position="41"/>
    </location>
</feature>
<gene>
    <name type="primary">CD52</name>
    <name type="synonym">CDW52</name>
    <name type="synonym">HE5</name>
</gene>
<evidence type="ECO:0000255" key="1"/>
<evidence type="ECO:0000269" key="2">
    <source>
    </source>
</evidence>
<evidence type="ECO:0000269" key="3">
    <source>
    </source>
</evidence>
<proteinExistence type="evidence at protein level"/>
<reference key="1">
    <citation type="journal article" date="1991" name="Eur. J. Immunol.">
        <title>Characterization of the CAMPATH-1 (CDw52) antigen: biochemical analysis and cDNA cloning reveal an unusually small peptide backbone.</title>
        <authorList>
            <person name="Xia M.-Q."/>
            <person name="Tone M."/>
            <person name="Packman L."/>
            <person name="Hale G."/>
            <person name="Waldmann H."/>
        </authorList>
    </citation>
    <scope>NUCLEOTIDE SEQUENCE [MRNA]</scope>
    <scope>PROTEIN SEQUENCE OF 25-35</scope>
    <source>
        <tissue>Spleen</tissue>
    </source>
</reference>
<reference key="2">
    <citation type="journal article" date="1993" name="Mol. Reprod. Dev.">
        <title>A major mRNA of the human epididymal principal cells, HE5, encodes the leucocyte differentiation CDw52 antigen peptide backbone.</title>
        <authorList>
            <person name="Kirchhoff C."/>
            <person name="Krull N."/>
            <person name="Pera I."/>
            <person name="Ivell R."/>
        </authorList>
    </citation>
    <scope>NUCLEOTIDE SEQUENCE [MRNA]</scope>
    <source>
        <tissue>Epididymis</tissue>
    </source>
</reference>
<reference key="3">
    <citation type="journal article" date="2006" name="Nature">
        <title>The DNA sequence and biological annotation of human chromosome 1.</title>
        <authorList>
            <person name="Gregory S.G."/>
            <person name="Barlow K.F."/>
            <person name="McLay K.E."/>
            <person name="Kaul R."/>
            <person name="Swarbreck D."/>
            <person name="Dunham A."/>
            <person name="Scott C.E."/>
            <person name="Howe K.L."/>
            <person name="Woodfine K."/>
            <person name="Spencer C.C.A."/>
            <person name="Jones M.C."/>
            <person name="Gillson C."/>
            <person name="Searle S."/>
            <person name="Zhou Y."/>
            <person name="Kokocinski F."/>
            <person name="McDonald L."/>
            <person name="Evans R."/>
            <person name="Phillips K."/>
            <person name="Atkinson A."/>
            <person name="Cooper R."/>
            <person name="Jones C."/>
            <person name="Hall R.E."/>
            <person name="Andrews T.D."/>
            <person name="Lloyd C."/>
            <person name="Ainscough R."/>
            <person name="Almeida J.P."/>
            <person name="Ambrose K.D."/>
            <person name="Anderson F."/>
            <person name="Andrew R.W."/>
            <person name="Ashwell R.I.S."/>
            <person name="Aubin K."/>
            <person name="Babbage A.K."/>
            <person name="Bagguley C.L."/>
            <person name="Bailey J."/>
            <person name="Beasley H."/>
            <person name="Bethel G."/>
            <person name="Bird C.P."/>
            <person name="Bray-Allen S."/>
            <person name="Brown J.Y."/>
            <person name="Brown A.J."/>
            <person name="Buckley D."/>
            <person name="Burton J."/>
            <person name="Bye J."/>
            <person name="Carder C."/>
            <person name="Chapman J.C."/>
            <person name="Clark S.Y."/>
            <person name="Clarke G."/>
            <person name="Clee C."/>
            <person name="Cobley V."/>
            <person name="Collier R.E."/>
            <person name="Corby N."/>
            <person name="Coville G.J."/>
            <person name="Davies J."/>
            <person name="Deadman R."/>
            <person name="Dunn M."/>
            <person name="Earthrowl M."/>
            <person name="Ellington A.G."/>
            <person name="Errington H."/>
            <person name="Frankish A."/>
            <person name="Frankland J."/>
            <person name="French L."/>
            <person name="Garner P."/>
            <person name="Garnett J."/>
            <person name="Gay L."/>
            <person name="Ghori M.R.J."/>
            <person name="Gibson R."/>
            <person name="Gilby L.M."/>
            <person name="Gillett W."/>
            <person name="Glithero R.J."/>
            <person name="Grafham D.V."/>
            <person name="Griffiths C."/>
            <person name="Griffiths-Jones S."/>
            <person name="Grocock R."/>
            <person name="Hammond S."/>
            <person name="Harrison E.S.I."/>
            <person name="Hart E."/>
            <person name="Haugen E."/>
            <person name="Heath P.D."/>
            <person name="Holmes S."/>
            <person name="Holt K."/>
            <person name="Howden P.J."/>
            <person name="Hunt A.R."/>
            <person name="Hunt S.E."/>
            <person name="Hunter G."/>
            <person name="Isherwood J."/>
            <person name="James R."/>
            <person name="Johnson C."/>
            <person name="Johnson D."/>
            <person name="Joy A."/>
            <person name="Kay M."/>
            <person name="Kershaw J.K."/>
            <person name="Kibukawa M."/>
            <person name="Kimberley A.M."/>
            <person name="King A."/>
            <person name="Knights A.J."/>
            <person name="Lad H."/>
            <person name="Laird G."/>
            <person name="Lawlor S."/>
            <person name="Leongamornlert D.A."/>
            <person name="Lloyd D.M."/>
            <person name="Loveland J."/>
            <person name="Lovell J."/>
            <person name="Lush M.J."/>
            <person name="Lyne R."/>
            <person name="Martin S."/>
            <person name="Mashreghi-Mohammadi M."/>
            <person name="Matthews L."/>
            <person name="Matthews N.S.W."/>
            <person name="McLaren S."/>
            <person name="Milne S."/>
            <person name="Mistry S."/>
            <person name="Moore M.J.F."/>
            <person name="Nickerson T."/>
            <person name="O'Dell C.N."/>
            <person name="Oliver K."/>
            <person name="Palmeiri A."/>
            <person name="Palmer S.A."/>
            <person name="Parker A."/>
            <person name="Patel D."/>
            <person name="Pearce A.V."/>
            <person name="Peck A.I."/>
            <person name="Pelan S."/>
            <person name="Phelps K."/>
            <person name="Phillimore B.J."/>
            <person name="Plumb R."/>
            <person name="Rajan J."/>
            <person name="Raymond C."/>
            <person name="Rouse G."/>
            <person name="Saenphimmachak C."/>
            <person name="Sehra H.K."/>
            <person name="Sheridan E."/>
            <person name="Shownkeen R."/>
            <person name="Sims S."/>
            <person name="Skuce C.D."/>
            <person name="Smith M."/>
            <person name="Steward C."/>
            <person name="Subramanian S."/>
            <person name="Sycamore N."/>
            <person name="Tracey A."/>
            <person name="Tromans A."/>
            <person name="Van Helmond Z."/>
            <person name="Wall M."/>
            <person name="Wallis J.M."/>
            <person name="White S."/>
            <person name="Whitehead S.L."/>
            <person name="Wilkinson J.E."/>
            <person name="Willey D.L."/>
            <person name="Williams H."/>
            <person name="Wilming L."/>
            <person name="Wray P.W."/>
            <person name="Wu Z."/>
            <person name="Coulson A."/>
            <person name="Vaudin M."/>
            <person name="Sulston J.E."/>
            <person name="Durbin R.M."/>
            <person name="Hubbard T."/>
            <person name="Wooster R."/>
            <person name="Dunham I."/>
            <person name="Carter N.P."/>
            <person name="McVean G."/>
            <person name="Ross M.T."/>
            <person name="Harrow J."/>
            <person name="Olson M.V."/>
            <person name="Beck S."/>
            <person name="Rogers J."/>
            <person name="Bentley D.R."/>
        </authorList>
    </citation>
    <scope>NUCLEOTIDE SEQUENCE [LARGE SCALE GENOMIC DNA]</scope>
</reference>
<reference key="4">
    <citation type="journal article" date="2004" name="Genome Res.">
        <title>The status, quality, and expansion of the NIH full-length cDNA project: the Mammalian Gene Collection (MGC).</title>
        <authorList>
            <consortium name="The MGC Project Team"/>
        </authorList>
    </citation>
    <scope>NUCLEOTIDE SEQUENCE [LARGE SCALE MRNA]</scope>
    <source>
        <tissue>Lymph</tissue>
    </source>
</reference>
<reference key="5">
    <citation type="journal article" date="1993" name="Biochem. J.">
        <title>Structure of the CAMPATH-1 antigen, a glycosylphosphatidylinositol-anchored glycoprotein which is an exceptionally good target for complement lysis.</title>
        <authorList>
            <person name="Xia M.Q."/>
            <person name="Hale G."/>
            <person name="Lifely M.R."/>
            <person name="Ferguson M.A."/>
            <person name="Campbell D."/>
            <person name="Packman L."/>
            <person name="Waldmann H."/>
        </authorList>
    </citation>
    <scope>GPI-ANCHOR AT SER-36</scope>
</reference>
<dbReference type="EMBL" id="X62466">
    <property type="protein sequence ID" value="CAA44323.1"/>
    <property type="molecule type" value="mRNA"/>
</dbReference>
<dbReference type="EMBL" id="X67699">
    <property type="protein sequence ID" value="CAA47929.1"/>
    <property type="molecule type" value="mRNA"/>
</dbReference>
<dbReference type="EMBL" id="AL451139">
    <property type="status" value="NOT_ANNOTATED_CDS"/>
    <property type="molecule type" value="Genomic_DNA"/>
</dbReference>
<dbReference type="EMBL" id="BC000644">
    <property type="protein sequence ID" value="AAH00644.1"/>
    <property type="molecule type" value="mRNA"/>
</dbReference>
<dbReference type="CCDS" id="CCDS30647.1"/>
<dbReference type="PIR" id="S18766">
    <property type="entry name" value="S18766"/>
</dbReference>
<dbReference type="RefSeq" id="NP_001794.2">
    <property type="nucleotide sequence ID" value="NM_001803.3"/>
</dbReference>
<dbReference type="PDB" id="6OBD">
    <property type="method" value="X-ray"/>
    <property type="resolution" value="2.20 A"/>
    <property type="chains" value="E/F=27-36"/>
</dbReference>
<dbReference type="PDBsum" id="6OBD"/>
<dbReference type="SMR" id="P31358"/>
<dbReference type="BioGRID" id="107473">
    <property type="interactions" value="6"/>
</dbReference>
<dbReference type="FunCoup" id="P31358">
    <property type="interactions" value="4"/>
</dbReference>
<dbReference type="STRING" id="9606.ENSP00000363330"/>
<dbReference type="ChEMBL" id="CHEMBL1912"/>
<dbReference type="DrugBank" id="DB00087">
    <property type="generic name" value="Alemtuzumab"/>
</dbReference>
<dbReference type="DrugCentral" id="P31358"/>
<dbReference type="GlyCosmos" id="P31358">
    <property type="glycosylation" value="2 sites, No reported glycans"/>
</dbReference>
<dbReference type="GlyGen" id="P31358">
    <property type="glycosylation" value="3 sites"/>
</dbReference>
<dbReference type="BioMuta" id="CD52"/>
<dbReference type="PaxDb" id="9606-ENSP00000363330"/>
<dbReference type="PeptideAtlas" id="P31358"/>
<dbReference type="ABCD" id="P31358">
    <property type="antibodies" value="53 sequenced antibodies"/>
</dbReference>
<dbReference type="Antibodypedia" id="16066">
    <property type="antibodies" value="872 antibodies from 34 providers"/>
</dbReference>
<dbReference type="DNASU" id="1043"/>
<dbReference type="Ensembl" id="ENST00000374213.3">
    <property type="protein sequence ID" value="ENSP00000363330.2"/>
    <property type="gene ID" value="ENSG00000169442.9"/>
</dbReference>
<dbReference type="GeneID" id="1043"/>
<dbReference type="KEGG" id="hsa:1043"/>
<dbReference type="MANE-Select" id="ENST00000374213.3">
    <property type="protein sequence ID" value="ENSP00000363330.2"/>
    <property type="RefSeq nucleotide sequence ID" value="NM_001803.3"/>
    <property type="RefSeq protein sequence ID" value="NP_001794.2"/>
</dbReference>
<dbReference type="AGR" id="HGNC:1804"/>
<dbReference type="CTD" id="1043"/>
<dbReference type="DisGeNET" id="1043"/>
<dbReference type="GeneCards" id="CD52"/>
<dbReference type="HGNC" id="HGNC:1804">
    <property type="gene designation" value="CD52"/>
</dbReference>
<dbReference type="HPA" id="ENSG00000169442">
    <property type="expression patterns" value="Tissue enriched (epididymis)"/>
</dbReference>
<dbReference type="MIM" id="114280">
    <property type="type" value="gene"/>
</dbReference>
<dbReference type="neXtProt" id="NX_P31358"/>
<dbReference type="OpenTargets" id="ENSG00000169442"/>
<dbReference type="PharmGKB" id="PA26350"/>
<dbReference type="VEuPathDB" id="HostDB:ENSG00000169442"/>
<dbReference type="eggNOG" id="ENOG502RR9C">
    <property type="taxonomic scope" value="Eukaryota"/>
</dbReference>
<dbReference type="GeneTree" id="ENSGT00860000134004"/>
<dbReference type="HOGENOM" id="CLU_205433_0_0_1"/>
<dbReference type="InParanoid" id="P31358"/>
<dbReference type="OMA" id="FANTLMC"/>
<dbReference type="PAN-GO" id="P31358">
    <property type="GO annotations" value="2 GO annotations based on evolutionary models"/>
</dbReference>
<dbReference type="PhylomeDB" id="P31358"/>
<dbReference type="TreeFam" id="TF338573"/>
<dbReference type="PathwayCommons" id="P31358"/>
<dbReference type="Reactome" id="R-HSA-163125">
    <property type="pathway name" value="Post-translational modification: synthesis of GPI-anchored proteins"/>
</dbReference>
<dbReference type="SignaLink" id="P31358"/>
<dbReference type="SIGNOR" id="P31358"/>
<dbReference type="BioGRID-ORCS" id="1043">
    <property type="hits" value="21 hits in 1162 CRISPR screens"/>
</dbReference>
<dbReference type="ChiTaRS" id="CD52">
    <property type="organism name" value="human"/>
</dbReference>
<dbReference type="GeneWiki" id="CD52"/>
<dbReference type="GenomeRNAi" id="1043"/>
<dbReference type="Pharos" id="P31358">
    <property type="development level" value="Tclin"/>
</dbReference>
<dbReference type="PRO" id="PR:P31358"/>
<dbReference type="Proteomes" id="UP000005640">
    <property type="component" value="Chromosome 1"/>
</dbReference>
<dbReference type="RNAct" id="P31358">
    <property type="molecule type" value="protein"/>
</dbReference>
<dbReference type="Bgee" id="ENSG00000169442">
    <property type="expression patterns" value="Expressed in corpus epididymis and 166 other cell types or tissues"/>
</dbReference>
<dbReference type="ExpressionAtlas" id="P31358">
    <property type="expression patterns" value="baseline and differential"/>
</dbReference>
<dbReference type="GO" id="GO:0005576">
    <property type="term" value="C:extracellular region"/>
    <property type="evidence" value="ECO:0000304"/>
    <property type="project" value="Reactome"/>
</dbReference>
<dbReference type="GO" id="GO:0016020">
    <property type="term" value="C:membrane"/>
    <property type="evidence" value="ECO:0000304"/>
    <property type="project" value="ProtInc"/>
</dbReference>
<dbReference type="GO" id="GO:0005886">
    <property type="term" value="C:plasma membrane"/>
    <property type="evidence" value="ECO:0000304"/>
    <property type="project" value="UniProtKB"/>
</dbReference>
<dbReference type="GO" id="GO:0098552">
    <property type="term" value="C:side of membrane"/>
    <property type="evidence" value="ECO:0007669"/>
    <property type="project" value="UniProtKB-KW"/>
</dbReference>
<dbReference type="GO" id="GO:0097225">
    <property type="term" value="C:sperm midpiece"/>
    <property type="evidence" value="ECO:0000318"/>
    <property type="project" value="GO_Central"/>
</dbReference>
<dbReference type="GO" id="GO:0007204">
    <property type="term" value="P:positive regulation of cytosolic calcium ion concentration"/>
    <property type="evidence" value="ECO:0000314"/>
    <property type="project" value="UniProtKB"/>
</dbReference>
<dbReference type="GO" id="GO:0045730">
    <property type="term" value="P:respiratory burst"/>
    <property type="evidence" value="ECO:0000303"/>
    <property type="project" value="UniProtKB"/>
</dbReference>
<dbReference type="InterPro" id="IPR026643">
    <property type="entry name" value="CAMPATH-1"/>
</dbReference>
<dbReference type="PANTHER" id="PTHR15029">
    <property type="entry name" value="CAMPATH-1 ANTIGEN"/>
    <property type="match status" value="1"/>
</dbReference>
<dbReference type="PANTHER" id="PTHR15029:SF0">
    <property type="entry name" value="CAMPATH-1 ANTIGEN"/>
    <property type="match status" value="1"/>
</dbReference>
<dbReference type="Pfam" id="PF15116">
    <property type="entry name" value="CD52"/>
    <property type="match status" value="1"/>
</dbReference>
<protein>
    <recommendedName>
        <fullName>CAMPATH-1 antigen</fullName>
    </recommendedName>
    <alternativeName>
        <fullName>CDw52</fullName>
    </alternativeName>
    <alternativeName>
        <fullName>Cambridge pathology 1 antigen</fullName>
    </alternativeName>
    <alternativeName>
        <fullName>Epididymal secretory protein E5</fullName>
    </alternativeName>
    <alternativeName>
        <fullName>Human epididymis-specific protein 5</fullName>
        <shortName>He5</shortName>
    </alternativeName>
    <cdAntigenName>CD52</cdAntigenName>
</protein>
<comment type="function">
    <text>May play a role in carrying and orienting carbohydrate, as well as having a more specific role.</text>
</comment>
<comment type="subcellular location">
    <subcellularLocation>
        <location>Cell membrane</location>
        <topology>Lipid-anchor</topology>
        <topology>GPI-anchor</topology>
    </subcellularLocation>
</comment>
<sequence length="61" mass="6614">MKRFLFLLLTISLLVMVQIQTGLSGQNDTSQTSSPSASSNISGGIFLFFVANAIIHLFCFS</sequence>
<keyword id="KW-0002">3D-structure</keyword>
<keyword id="KW-1003">Cell membrane</keyword>
<keyword id="KW-0903">Direct protein sequencing</keyword>
<keyword id="KW-0325">Glycoprotein</keyword>
<keyword id="KW-0336">GPI-anchor</keyword>
<keyword id="KW-0449">Lipoprotein</keyword>
<keyword id="KW-0472">Membrane</keyword>
<keyword id="KW-1185">Reference proteome</keyword>
<keyword id="KW-0732">Signal</keyword>
<accession>P31358</accession>
<accession>Q5T138</accession>
<accession>Q9BW46</accession>
<name>CD52_HUMAN</name>